<protein>
    <recommendedName>
        <fullName evidence="1">Ribosomal RNA large subunit methyltransferase K/L</fullName>
    </recommendedName>
    <domain>
        <recommendedName>
            <fullName evidence="1">23S rRNA m2G2445 methyltransferase</fullName>
            <ecNumber evidence="1">2.1.1.173</ecNumber>
        </recommendedName>
        <alternativeName>
            <fullName evidence="1">rRNA (guanine-N(2)-)-methyltransferase RlmL</fullName>
        </alternativeName>
    </domain>
    <domain>
        <recommendedName>
            <fullName evidence="1">23S rRNA m7G2069 methyltransferase</fullName>
            <ecNumber evidence="1">2.1.1.264</ecNumber>
        </recommendedName>
        <alternativeName>
            <fullName evidence="1">rRNA (guanine-N(7)-)-methyltransferase RlmK</fullName>
        </alternativeName>
    </domain>
</protein>
<feature type="chain" id="PRO_0000366856" description="Ribosomal RNA large subunit methyltransferase K/L">
    <location>
        <begin position="1"/>
        <end position="711"/>
    </location>
</feature>
<feature type="domain" description="THUMP" evidence="1">
    <location>
        <begin position="42"/>
        <end position="153"/>
    </location>
</feature>
<dbReference type="EC" id="2.1.1.173" evidence="1"/>
<dbReference type="EC" id="2.1.1.264" evidence="1"/>
<dbReference type="EMBL" id="AM920689">
    <property type="protein sequence ID" value="CAP52076.1"/>
    <property type="status" value="ALT_INIT"/>
    <property type="molecule type" value="Genomic_DNA"/>
</dbReference>
<dbReference type="SMR" id="B0RV07"/>
<dbReference type="KEGG" id="xca:xcc-b100_2715"/>
<dbReference type="HOGENOM" id="CLU_014042_2_0_6"/>
<dbReference type="Proteomes" id="UP000001188">
    <property type="component" value="Chromosome"/>
</dbReference>
<dbReference type="GO" id="GO:0005737">
    <property type="term" value="C:cytoplasm"/>
    <property type="evidence" value="ECO:0007669"/>
    <property type="project" value="UniProtKB-SubCell"/>
</dbReference>
<dbReference type="GO" id="GO:0052915">
    <property type="term" value="F:23S rRNA (guanine(2445)-N(2))-methyltransferase activity"/>
    <property type="evidence" value="ECO:0007669"/>
    <property type="project" value="UniProtKB-UniRule"/>
</dbReference>
<dbReference type="GO" id="GO:0003723">
    <property type="term" value="F:RNA binding"/>
    <property type="evidence" value="ECO:0007669"/>
    <property type="project" value="UniProtKB-KW"/>
</dbReference>
<dbReference type="GO" id="GO:0070043">
    <property type="term" value="F:rRNA (guanine-N7-)-methyltransferase activity"/>
    <property type="evidence" value="ECO:0007669"/>
    <property type="project" value="UniProtKB-UniRule"/>
</dbReference>
<dbReference type="CDD" id="cd02440">
    <property type="entry name" value="AdoMet_MTases"/>
    <property type="match status" value="1"/>
</dbReference>
<dbReference type="CDD" id="cd11715">
    <property type="entry name" value="THUMP_AdoMetMT"/>
    <property type="match status" value="1"/>
</dbReference>
<dbReference type="FunFam" id="3.30.750.80:FF:000003">
    <property type="entry name" value="Ribosomal RNA large subunit methyltransferase K/L"/>
    <property type="match status" value="1"/>
</dbReference>
<dbReference type="Gene3D" id="3.30.2130.30">
    <property type="match status" value="1"/>
</dbReference>
<dbReference type="Gene3D" id="3.30.750.80">
    <property type="entry name" value="RNA methyltransferase domain (HRMD) like"/>
    <property type="match status" value="1"/>
</dbReference>
<dbReference type="Gene3D" id="3.40.50.150">
    <property type="entry name" value="Vaccinia Virus protein VP39"/>
    <property type="match status" value="2"/>
</dbReference>
<dbReference type="HAMAP" id="MF_01858">
    <property type="entry name" value="23SrRNA_methyltr_KL"/>
    <property type="match status" value="1"/>
</dbReference>
<dbReference type="InterPro" id="IPR017244">
    <property type="entry name" value="23SrRNA_methyltr_KL"/>
</dbReference>
<dbReference type="InterPro" id="IPR002052">
    <property type="entry name" value="DNA_methylase_N6_adenine_CS"/>
</dbReference>
<dbReference type="InterPro" id="IPR000241">
    <property type="entry name" value="RlmKL-like_Mtase"/>
</dbReference>
<dbReference type="InterPro" id="IPR053943">
    <property type="entry name" value="RlmKL-like_Mtase_CS"/>
</dbReference>
<dbReference type="InterPro" id="IPR054170">
    <property type="entry name" value="RlmL_1st"/>
</dbReference>
<dbReference type="InterPro" id="IPR019614">
    <property type="entry name" value="SAM-dep_methyl-trfase"/>
</dbReference>
<dbReference type="InterPro" id="IPR029063">
    <property type="entry name" value="SAM-dependent_MTases_sf"/>
</dbReference>
<dbReference type="InterPro" id="IPR004114">
    <property type="entry name" value="THUMP_dom"/>
</dbReference>
<dbReference type="NCBIfam" id="NF008748">
    <property type="entry name" value="PRK11783.1"/>
    <property type="match status" value="1"/>
</dbReference>
<dbReference type="PANTHER" id="PTHR47313">
    <property type="entry name" value="RIBOSOMAL RNA LARGE SUBUNIT METHYLTRANSFERASE K/L"/>
    <property type="match status" value="1"/>
</dbReference>
<dbReference type="PANTHER" id="PTHR47313:SF1">
    <property type="entry name" value="RIBOSOMAL RNA LARGE SUBUNIT METHYLTRANSFERASE K_L"/>
    <property type="match status" value="1"/>
</dbReference>
<dbReference type="Pfam" id="PF10672">
    <property type="entry name" value="Methyltrans_SAM"/>
    <property type="match status" value="1"/>
</dbReference>
<dbReference type="Pfam" id="PF22020">
    <property type="entry name" value="RlmL_1st"/>
    <property type="match status" value="1"/>
</dbReference>
<dbReference type="Pfam" id="PF02926">
    <property type="entry name" value="THUMP"/>
    <property type="match status" value="1"/>
</dbReference>
<dbReference type="Pfam" id="PF01170">
    <property type="entry name" value="UPF0020"/>
    <property type="match status" value="1"/>
</dbReference>
<dbReference type="PIRSF" id="PIRSF037618">
    <property type="entry name" value="RNA_Mtase_bacteria_prd"/>
    <property type="match status" value="1"/>
</dbReference>
<dbReference type="SMART" id="SM00981">
    <property type="entry name" value="THUMP"/>
    <property type="match status" value="1"/>
</dbReference>
<dbReference type="SUPFAM" id="SSF53335">
    <property type="entry name" value="S-adenosyl-L-methionine-dependent methyltransferases"/>
    <property type="match status" value="2"/>
</dbReference>
<dbReference type="PROSITE" id="PS51165">
    <property type="entry name" value="THUMP"/>
    <property type="match status" value="1"/>
</dbReference>
<dbReference type="PROSITE" id="PS01261">
    <property type="entry name" value="UPF0020"/>
    <property type="match status" value="1"/>
</dbReference>
<reference key="1">
    <citation type="journal article" date="2008" name="J. Biotechnol.">
        <title>The genome of Xanthomonas campestris pv. campestris B100 and its use for the reconstruction of metabolic pathways involved in xanthan biosynthesis.</title>
        <authorList>
            <person name="Vorhoelter F.-J."/>
            <person name="Schneiker S."/>
            <person name="Goesmann A."/>
            <person name="Krause L."/>
            <person name="Bekel T."/>
            <person name="Kaiser O."/>
            <person name="Linke B."/>
            <person name="Patschkowski T."/>
            <person name="Rueckert C."/>
            <person name="Schmid J."/>
            <person name="Sidhu V.K."/>
            <person name="Sieber V."/>
            <person name="Tauch A."/>
            <person name="Watt S.A."/>
            <person name="Weisshaar B."/>
            <person name="Becker A."/>
            <person name="Niehaus K."/>
            <person name="Puehler A."/>
        </authorList>
    </citation>
    <scope>NUCLEOTIDE SEQUENCE [LARGE SCALE GENOMIC DNA]</scope>
    <source>
        <strain>B100</strain>
    </source>
</reference>
<organism>
    <name type="scientific">Xanthomonas campestris pv. campestris (strain B100)</name>
    <dbReference type="NCBI Taxonomy" id="509169"/>
    <lineage>
        <taxon>Bacteria</taxon>
        <taxon>Pseudomonadati</taxon>
        <taxon>Pseudomonadota</taxon>
        <taxon>Gammaproteobacteria</taxon>
        <taxon>Lysobacterales</taxon>
        <taxon>Lysobacteraceae</taxon>
        <taxon>Xanthomonas</taxon>
    </lineage>
</organism>
<sequence>MKFFASCAKGLEYLLADELLALGASKATATISGVNVEGALRDAQRAVLWSRLASRVLWPLTEFDCPDEDALYAGVAELPWHEHLSTGHTLSVDAHVSGTAITHARYAAQRIKDAVVDTIRRQGLERPSVDVESPDLRLNLSLRKGRATISVDLGGGPLHRRGWRMAQNEAPLKENLAAAVLLRAGWPRAYADGGGLLDPMCGSGTLLIEGALMAADVAPGLQRYGSDIPSRWRGFDRDSWQQLVTEARERDSVGRAALKQVIHGSDMDPHAIRAAKENAQVAGVAEAIWFGVREVGDLQTRPQATGVVVCNPPYDERLAADAALYRKLGDTLQRVVPQWRASLLCGNAELAYATGLRAGKKYQLFNGAIECALIVCDPIAVPRRTPLAAPTALSEGAQMVANRLRKNLQKFKKWRAREGIECFRVYDADLPEYSAAIDVYQQADGDRRIFLHVQEYAAPATIPEADVRRRLGELLAAAREVFEVPAERVALKSRERGKGGSKYGRFEQRNEIVNVREHGALLRVNLFDYLDTGLFLDHRPLRGTMAQQSKGRRFLNLFCYTGVASVQAAVAGASATTSVDLSGTYLQWCADNLALNGQAGSKHKLVQADALAWLEAERAHFDVIFCDPPTFSNSARAEDFDIQREHVRLLRAAVARLAPGGVLYFSNNFRRFKLDEEAVAEFAQCEEISPRTIDPDFERHVRIHRAWRLTA</sequence>
<accession>B0RV07</accession>
<comment type="function">
    <text evidence="1">Specifically methylates the guanine in position 2445 (m2G2445) and the guanine in position 2069 (m7G2069) of 23S rRNA.</text>
</comment>
<comment type="catalytic activity">
    <reaction evidence="1">
        <text>guanosine(2445) in 23S rRNA + S-adenosyl-L-methionine = N(2)-methylguanosine(2445) in 23S rRNA + S-adenosyl-L-homocysteine + H(+)</text>
        <dbReference type="Rhea" id="RHEA:42740"/>
        <dbReference type="Rhea" id="RHEA-COMP:10215"/>
        <dbReference type="Rhea" id="RHEA-COMP:10216"/>
        <dbReference type="ChEBI" id="CHEBI:15378"/>
        <dbReference type="ChEBI" id="CHEBI:57856"/>
        <dbReference type="ChEBI" id="CHEBI:59789"/>
        <dbReference type="ChEBI" id="CHEBI:74269"/>
        <dbReference type="ChEBI" id="CHEBI:74481"/>
        <dbReference type="EC" id="2.1.1.173"/>
    </reaction>
</comment>
<comment type="catalytic activity">
    <reaction evidence="1">
        <text>guanosine(2069) in 23S rRNA + S-adenosyl-L-methionine = N(2)-methylguanosine(2069) in 23S rRNA + S-adenosyl-L-homocysteine + H(+)</text>
        <dbReference type="Rhea" id="RHEA:43772"/>
        <dbReference type="Rhea" id="RHEA-COMP:10688"/>
        <dbReference type="Rhea" id="RHEA-COMP:10689"/>
        <dbReference type="ChEBI" id="CHEBI:15378"/>
        <dbReference type="ChEBI" id="CHEBI:57856"/>
        <dbReference type="ChEBI" id="CHEBI:59789"/>
        <dbReference type="ChEBI" id="CHEBI:74269"/>
        <dbReference type="ChEBI" id="CHEBI:74481"/>
        <dbReference type="EC" id="2.1.1.264"/>
    </reaction>
</comment>
<comment type="subcellular location">
    <subcellularLocation>
        <location evidence="1">Cytoplasm</location>
    </subcellularLocation>
</comment>
<comment type="similarity">
    <text evidence="1">Belongs to the methyltransferase superfamily. RlmKL family.</text>
</comment>
<comment type="sequence caution" evidence="2">
    <conflict type="erroneous initiation">
        <sequence resource="EMBL-CDS" id="CAP52076"/>
    </conflict>
    <text>Extended N-terminus.</text>
</comment>
<keyword id="KW-0963">Cytoplasm</keyword>
<keyword id="KW-0489">Methyltransferase</keyword>
<keyword id="KW-0694">RNA-binding</keyword>
<keyword id="KW-0698">rRNA processing</keyword>
<keyword id="KW-0949">S-adenosyl-L-methionine</keyword>
<keyword id="KW-0808">Transferase</keyword>
<evidence type="ECO:0000255" key="1">
    <source>
        <dbReference type="HAMAP-Rule" id="MF_01858"/>
    </source>
</evidence>
<evidence type="ECO:0000305" key="2"/>
<name>RLMKL_XANCB</name>
<proteinExistence type="inferred from homology"/>
<gene>
    <name evidence="1" type="primary">rlmL</name>
    <name type="ordered locus">xcc-b100_2715</name>
</gene>